<keyword id="KW-0025">Alternative splicing</keyword>
<keyword id="KW-0175">Coiled coil</keyword>
<keyword id="KW-0238">DNA-binding</keyword>
<keyword id="KW-0371">Homeobox</keyword>
<keyword id="KW-0539">Nucleus</keyword>
<keyword id="KW-1185">Reference proteome</keyword>
<keyword id="KW-0804">Transcription</keyword>
<keyword id="KW-0805">Transcription regulation</keyword>
<proteinExistence type="evidence at transcript level"/>
<sequence length="813" mass="86758">MQFPFSGAGPGVFTSSPALSLALADAVAGRNSGGGGKMVTAAHGGVGGGGGGGRAKARDALEVENEMSRSGSDHLDVVSCGDAGGGGGDDDDDEDAEHGNPPKRKKRYHRHTPQQIQELEAMFKECPHPDEKQRAELSKRLGLEPRQVKFWFQNRRTQMKMQLERHENSLLKQENDKLRSENLSIREATSNAVCVGCGGPAMLGEVSLEEHHLRVENARLKDELSRVCALAAKFLGKSISVMAPPQMHQPHPVPGSSLELAVGGIGSMPSATMPISTITDFAGAMSSSMGTVITPMKSEAEPSAMAGIDKSLFLELAMSAMDELVKMAQMGDPLWIPGASVPSSPAKESLNFEEYLNTFPPCIGVKPEGYVSEASRESGIVIIDDGAALVETLMDERRWSDMFSCMIAKASTTEEISTGVAGSRNGALLLVSDEHSVMQAELQVLSPLVPIREVKFLRFSKQLADGVWAVVDVSADELMRDQGITSASSTANMNCRRLPSGCVLQDTPNGFVKVTWVEHTEYDEASVHPLYRPLLRSGLALGAGRWIATLQRQCECLALLMSSIALPENDSSAIHPEGKRSMLKLARRMTDNFCAGVSTSSTREWSKLVGLTGNIGEDVHVMARKSVDEPGTPPGVVLSAATSVWMPVMPERLFNFLHNKGLRAEWDILSNGGPMQEVTSIAKGQQNGNTVCLLKASPTKDKQNSMLILQETCADASGSMVVYAPVDIPAMHLVMSGGDSSCVALLPSGFAILPAGPSIGADHKMGGSLLTVAFQILANSQPSAKLTVESVETVSNLISCTIKKIKTALHCDV</sequence>
<feature type="chain" id="PRO_0000331741" description="Homeobox-leucine zipper protein ROC4">
    <location>
        <begin position="1"/>
        <end position="813"/>
    </location>
</feature>
<feature type="domain" description="START" evidence="4">
    <location>
        <begin position="306"/>
        <end position="559"/>
    </location>
</feature>
<feature type="DNA-binding region" description="Homeobox" evidence="3">
    <location>
        <begin position="104"/>
        <end position="163"/>
    </location>
</feature>
<feature type="region of interest" description="Disordered" evidence="5">
    <location>
        <begin position="62"/>
        <end position="112"/>
    </location>
</feature>
<feature type="coiled-coil region" evidence="2">
    <location>
        <begin position="152"/>
        <end position="191"/>
    </location>
</feature>
<feature type="compositionally biased region" description="Basic residues" evidence="5">
    <location>
        <begin position="101"/>
        <end position="112"/>
    </location>
</feature>
<feature type="splice variant" id="VSP_033316" description="In isoform 2." evidence="6">
    <location>
        <begin position="431"/>
        <end position="437"/>
    </location>
</feature>
<feature type="sequence conflict" description="In Ref. 6; AK112099." evidence="7" ref="6">
    <original>L</original>
    <variation>P</variation>
    <location>
        <position position="220"/>
    </location>
</feature>
<feature type="sequence conflict" description="In Ref. 6; AK112099." evidence="7" ref="6">
    <original>K</original>
    <variation>R</variation>
    <location>
        <position position="461"/>
    </location>
</feature>
<dbReference type="EMBL" id="AB101647">
    <property type="protein sequence ID" value="BAC77157.1"/>
    <property type="molecule type" value="mRNA"/>
</dbReference>
<dbReference type="EMBL" id="AL663003">
    <property type="protein sequence ID" value="CAD41424.2"/>
    <property type="molecule type" value="Genomic_DNA"/>
</dbReference>
<dbReference type="EMBL" id="AP008210">
    <property type="protein sequence ID" value="BAF15509.1"/>
    <property type="molecule type" value="Genomic_DNA"/>
</dbReference>
<dbReference type="EMBL" id="AP014960">
    <property type="protein sequence ID" value="BAS90557.1"/>
    <property type="molecule type" value="Genomic_DNA"/>
</dbReference>
<dbReference type="EMBL" id="AK112099">
    <property type="status" value="NOT_ANNOTATED_CDS"/>
    <property type="molecule type" value="mRNA"/>
</dbReference>
<dbReference type="RefSeq" id="XP_015637147.1">
    <property type="nucleotide sequence ID" value="XM_015781661.1"/>
</dbReference>
<dbReference type="SMR" id="Q7Y0V9"/>
<dbReference type="FunCoup" id="Q7Y0V9">
    <property type="interactions" value="798"/>
</dbReference>
<dbReference type="STRING" id="39947.Q7Y0V9"/>
<dbReference type="PaxDb" id="39947-Q7Y0V9"/>
<dbReference type="EnsemblPlants" id="Os04t0569100-02">
    <molecule id="Q7Y0V9-1"/>
    <property type="protein sequence ID" value="Os04t0569100-02"/>
    <property type="gene ID" value="Os04g0569100"/>
</dbReference>
<dbReference type="Gramene" id="Os04t0569100-02">
    <molecule id="Q7Y0V9-1"/>
    <property type="protein sequence ID" value="Os04t0569100-02"/>
    <property type="gene ID" value="Os04g0569100"/>
</dbReference>
<dbReference type="KEGG" id="dosa:Os04g0569100"/>
<dbReference type="eggNOG" id="ENOG502QUAY">
    <property type="taxonomic scope" value="Eukaryota"/>
</dbReference>
<dbReference type="HOGENOM" id="CLU_015002_2_1_1"/>
<dbReference type="InParanoid" id="Q7Y0V9"/>
<dbReference type="OMA" id="GADHKMG"/>
<dbReference type="OrthoDB" id="6159439at2759"/>
<dbReference type="Proteomes" id="UP000000763">
    <property type="component" value="Chromosome 4"/>
</dbReference>
<dbReference type="Proteomes" id="UP000059680">
    <property type="component" value="Chromosome 4"/>
</dbReference>
<dbReference type="GO" id="GO:0005634">
    <property type="term" value="C:nucleus"/>
    <property type="evidence" value="ECO:0007669"/>
    <property type="project" value="UniProtKB-SubCell"/>
</dbReference>
<dbReference type="GO" id="GO:0003677">
    <property type="term" value="F:DNA binding"/>
    <property type="evidence" value="ECO:0007669"/>
    <property type="project" value="UniProtKB-KW"/>
</dbReference>
<dbReference type="GO" id="GO:0000981">
    <property type="term" value="F:DNA-binding transcription factor activity, RNA polymerase II-specific"/>
    <property type="evidence" value="ECO:0007669"/>
    <property type="project" value="InterPro"/>
</dbReference>
<dbReference type="GO" id="GO:0008289">
    <property type="term" value="F:lipid binding"/>
    <property type="evidence" value="ECO:0007669"/>
    <property type="project" value="InterPro"/>
</dbReference>
<dbReference type="CDD" id="cd00086">
    <property type="entry name" value="homeodomain"/>
    <property type="match status" value="1"/>
</dbReference>
<dbReference type="CDD" id="cd08875">
    <property type="entry name" value="START_ArGLABRA2_like"/>
    <property type="match status" value="1"/>
</dbReference>
<dbReference type="FunFam" id="1.10.10.60:FF:000229">
    <property type="entry name" value="Homeobox-leucine zipper protein HDG1"/>
    <property type="match status" value="1"/>
</dbReference>
<dbReference type="Gene3D" id="1.10.10.60">
    <property type="entry name" value="Homeodomain-like"/>
    <property type="match status" value="1"/>
</dbReference>
<dbReference type="InterPro" id="IPR042160">
    <property type="entry name" value="GLABRA2/ANL2/PDF2/ATML1-like"/>
</dbReference>
<dbReference type="InterPro" id="IPR001356">
    <property type="entry name" value="HD"/>
</dbReference>
<dbReference type="InterPro" id="IPR017970">
    <property type="entry name" value="Homeobox_CS"/>
</dbReference>
<dbReference type="InterPro" id="IPR009057">
    <property type="entry name" value="Homeodomain-like_sf"/>
</dbReference>
<dbReference type="InterPro" id="IPR000047">
    <property type="entry name" value="HTH_motif"/>
</dbReference>
<dbReference type="InterPro" id="IPR002913">
    <property type="entry name" value="START_lipid-bd_dom"/>
</dbReference>
<dbReference type="PANTHER" id="PTHR45654:SF5">
    <property type="entry name" value="HOMEOBOX-LEUCINE ZIPPER PROTEIN ANTHOCYANINLESS 2-RELATED"/>
    <property type="match status" value="1"/>
</dbReference>
<dbReference type="PANTHER" id="PTHR45654">
    <property type="entry name" value="HOMEOBOX-LEUCINE ZIPPER PROTEIN MERISTEM L1"/>
    <property type="match status" value="1"/>
</dbReference>
<dbReference type="Pfam" id="PF00046">
    <property type="entry name" value="Homeodomain"/>
    <property type="match status" value="1"/>
</dbReference>
<dbReference type="Pfam" id="PF01852">
    <property type="entry name" value="START"/>
    <property type="match status" value="1"/>
</dbReference>
<dbReference type="PRINTS" id="PR00031">
    <property type="entry name" value="HTHREPRESSR"/>
</dbReference>
<dbReference type="SMART" id="SM00389">
    <property type="entry name" value="HOX"/>
    <property type="match status" value="1"/>
</dbReference>
<dbReference type="SMART" id="SM00234">
    <property type="entry name" value="START"/>
    <property type="match status" value="1"/>
</dbReference>
<dbReference type="SUPFAM" id="SSF55961">
    <property type="entry name" value="Bet v1-like"/>
    <property type="match status" value="2"/>
</dbReference>
<dbReference type="SUPFAM" id="SSF46689">
    <property type="entry name" value="Homeodomain-like"/>
    <property type="match status" value="1"/>
</dbReference>
<dbReference type="PROSITE" id="PS00027">
    <property type="entry name" value="HOMEOBOX_1"/>
    <property type="match status" value="1"/>
</dbReference>
<dbReference type="PROSITE" id="PS50071">
    <property type="entry name" value="HOMEOBOX_2"/>
    <property type="match status" value="1"/>
</dbReference>
<dbReference type="PROSITE" id="PS50848">
    <property type="entry name" value="START"/>
    <property type="match status" value="1"/>
</dbReference>
<accession>Q7Y0V9</accession>
<accession>Q7XUB3</accession>
<organism>
    <name type="scientific">Oryza sativa subsp. japonica</name>
    <name type="common">Rice</name>
    <dbReference type="NCBI Taxonomy" id="39947"/>
    <lineage>
        <taxon>Eukaryota</taxon>
        <taxon>Viridiplantae</taxon>
        <taxon>Streptophyta</taxon>
        <taxon>Embryophyta</taxon>
        <taxon>Tracheophyta</taxon>
        <taxon>Spermatophyta</taxon>
        <taxon>Magnoliopsida</taxon>
        <taxon>Liliopsida</taxon>
        <taxon>Poales</taxon>
        <taxon>Poaceae</taxon>
        <taxon>BOP clade</taxon>
        <taxon>Oryzoideae</taxon>
        <taxon>Oryzeae</taxon>
        <taxon>Oryzinae</taxon>
        <taxon>Oryza</taxon>
        <taxon>Oryza sativa</taxon>
    </lineage>
</organism>
<comment type="function">
    <text evidence="1">Probable transcription factor.</text>
</comment>
<comment type="subcellular location">
    <subcellularLocation>
        <location evidence="7">Nucleus</location>
    </subcellularLocation>
</comment>
<comment type="alternative products">
    <event type="alternative splicing"/>
    <isoform>
        <id>Q7Y0V9-1</id>
        <name>1</name>
        <sequence type="displayed"/>
    </isoform>
    <isoform>
        <id>Q7Y0V9-2</id>
        <name>2</name>
        <sequence type="described" ref="VSP_033316"/>
    </isoform>
</comment>
<comment type="similarity">
    <text evidence="7">Belongs to the HD-ZIP homeobox family. Class IV subfamily.</text>
</comment>
<name>ROC4_ORYSJ</name>
<gene>
    <name type="primary">ROC4</name>
    <name type="synonym">GL2-4</name>
    <name type="ordered locus">Os04g0569100</name>
    <name type="ordered locus">LOC_Os04g48070</name>
    <name type="ORF">OSJNBb0032E06.7</name>
</gene>
<evidence type="ECO:0000250" key="1"/>
<evidence type="ECO:0000255" key="2"/>
<evidence type="ECO:0000255" key="3">
    <source>
        <dbReference type="PROSITE-ProRule" id="PRU00108"/>
    </source>
</evidence>
<evidence type="ECO:0000255" key="4">
    <source>
        <dbReference type="PROSITE-ProRule" id="PRU00197"/>
    </source>
</evidence>
<evidence type="ECO:0000256" key="5">
    <source>
        <dbReference type="SAM" id="MobiDB-lite"/>
    </source>
</evidence>
<evidence type="ECO:0000303" key="6">
    <source>
    </source>
</evidence>
<evidence type="ECO:0000305" key="7"/>
<protein>
    <recommendedName>
        <fullName>Homeobox-leucine zipper protein ROC4</fullName>
    </recommendedName>
    <alternativeName>
        <fullName>GLABRA 2-like homeobox protein 4</fullName>
    </alternativeName>
    <alternativeName>
        <fullName>HD-ZIP protein ROC4</fullName>
    </alternativeName>
    <alternativeName>
        <fullName>Homeodomain transcription factor ROC4</fullName>
    </alternativeName>
    <alternativeName>
        <fullName>Protein RICE OUTERMOST CELL-SPECIFIC 4</fullName>
    </alternativeName>
</protein>
<reference key="1">
    <citation type="submission" date="2003-01" db="EMBL/GenBank/DDBJ databases">
        <title>The roles of rice GL2-type homeobox genes in epidermis differentiation.</title>
        <authorList>
            <person name="Ito M."/>
            <person name="Sentoku N."/>
            <person name="Nishimura A."/>
            <person name="Hong S.-K."/>
            <person name="Sato Y."/>
            <person name="Matsuoka M."/>
        </authorList>
    </citation>
    <scope>NUCLEOTIDE SEQUENCE [MRNA] (ISOFORM 1)</scope>
</reference>
<reference key="2">
    <citation type="journal article" date="2002" name="Nature">
        <title>Sequence and analysis of rice chromosome 4.</title>
        <authorList>
            <person name="Feng Q."/>
            <person name="Zhang Y."/>
            <person name="Hao P."/>
            <person name="Wang S."/>
            <person name="Fu G."/>
            <person name="Huang Y."/>
            <person name="Li Y."/>
            <person name="Zhu J."/>
            <person name="Liu Y."/>
            <person name="Hu X."/>
            <person name="Jia P."/>
            <person name="Zhang Y."/>
            <person name="Zhao Q."/>
            <person name="Ying K."/>
            <person name="Yu S."/>
            <person name="Tang Y."/>
            <person name="Weng Q."/>
            <person name="Zhang L."/>
            <person name="Lu Y."/>
            <person name="Mu J."/>
            <person name="Lu Y."/>
            <person name="Zhang L.S."/>
            <person name="Yu Z."/>
            <person name="Fan D."/>
            <person name="Liu X."/>
            <person name="Lu T."/>
            <person name="Li C."/>
            <person name="Wu Y."/>
            <person name="Sun T."/>
            <person name="Lei H."/>
            <person name="Li T."/>
            <person name="Hu H."/>
            <person name="Guan J."/>
            <person name="Wu M."/>
            <person name="Zhang R."/>
            <person name="Zhou B."/>
            <person name="Chen Z."/>
            <person name="Chen L."/>
            <person name="Jin Z."/>
            <person name="Wang R."/>
            <person name="Yin H."/>
            <person name="Cai Z."/>
            <person name="Ren S."/>
            <person name="Lv G."/>
            <person name="Gu W."/>
            <person name="Zhu G."/>
            <person name="Tu Y."/>
            <person name="Jia J."/>
            <person name="Zhang Y."/>
            <person name="Chen J."/>
            <person name="Kang H."/>
            <person name="Chen X."/>
            <person name="Shao C."/>
            <person name="Sun Y."/>
            <person name="Hu Q."/>
            <person name="Zhang X."/>
            <person name="Zhang W."/>
            <person name="Wang L."/>
            <person name="Ding C."/>
            <person name="Sheng H."/>
            <person name="Gu J."/>
            <person name="Chen S."/>
            <person name="Ni L."/>
            <person name="Zhu F."/>
            <person name="Chen W."/>
            <person name="Lan L."/>
            <person name="Lai Y."/>
            <person name="Cheng Z."/>
            <person name="Gu M."/>
            <person name="Jiang J."/>
            <person name="Li J."/>
            <person name="Hong G."/>
            <person name="Xue Y."/>
            <person name="Han B."/>
        </authorList>
    </citation>
    <scope>NUCLEOTIDE SEQUENCE [LARGE SCALE GENOMIC DNA]</scope>
    <source>
        <strain>cv. Nipponbare</strain>
    </source>
</reference>
<reference key="3">
    <citation type="journal article" date="2005" name="Nature">
        <title>The map-based sequence of the rice genome.</title>
        <authorList>
            <consortium name="International rice genome sequencing project (IRGSP)"/>
        </authorList>
    </citation>
    <scope>NUCLEOTIDE SEQUENCE [LARGE SCALE GENOMIC DNA]</scope>
    <source>
        <strain>cv. Nipponbare</strain>
    </source>
</reference>
<reference key="4">
    <citation type="journal article" date="2008" name="Nucleic Acids Res.">
        <title>The rice annotation project database (RAP-DB): 2008 update.</title>
        <authorList>
            <consortium name="The rice annotation project (RAP)"/>
        </authorList>
    </citation>
    <scope>GENOME REANNOTATION</scope>
    <source>
        <strain>cv. Nipponbare</strain>
    </source>
</reference>
<reference key="5">
    <citation type="journal article" date="2013" name="Rice">
        <title>Improvement of the Oryza sativa Nipponbare reference genome using next generation sequence and optical map data.</title>
        <authorList>
            <person name="Kawahara Y."/>
            <person name="de la Bastide M."/>
            <person name="Hamilton J.P."/>
            <person name="Kanamori H."/>
            <person name="McCombie W.R."/>
            <person name="Ouyang S."/>
            <person name="Schwartz D.C."/>
            <person name="Tanaka T."/>
            <person name="Wu J."/>
            <person name="Zhou S."/>
            <person name="Childs K.L."/>
            <person name="Davidson R.M."/>
            <person name="Lin H."/>
            <person name="Quesada-Ocampo L."/>
            <person name="Vaillancourt B."/>
            <person name="Sakai H."/>
            <person name="Lee S.S."/>
            <person name="Kim J."/>
            <person name="Numa H."/>
            <person name="Itoh T."/>
            <person name="Buell C.R."/>
            <person name="Matsumoto T."/>
        </authorList>
    </citation>
    <scope>GENOME REANNOTATION</scope>
    <source>
        <strain>cv. Nipponbare</strain>
    </source>
</reference>
<reference key="6">
    <citation type="journal article" date="2003" name="Science">
        <title>Collection, mapping, and annotation of over 28,000 cDNA clones from japonica rice.</title>
        <authorList>
            <consortium name="The rice full-length cDNA consortium"/>
        </authorList>
    </citation>
    <scope>NUCLEOTIDE SEQUENCE [LARGE SCALE MRNA] (ISOFORM 2)</scope>
    <source>
        <strain>cv. Nipponbare</strain>
    </source>
</reference>